<keyword id="KW-0895">ERV</keyword>
<keyword id="KW-0325">Glycoprotein</keyword>
<keyword id="KW-0472">Membrane</keyword>
<keyword id="KW-1267">Proteomics identification</keyword>
<keyword id="KW-1185">Reference proteome</keyword>
<keyword id="KW-0732">Signal</keyword>
<keyword id="KW-0812">Transmembrane</keyword>
<keyword id="KW-1133">Transmembrane helix</keyword>
<keyword id="KW-0814">Transposable element</keyword>
<name>ERVV2_HUMAN</name>
<reference key="1">
    <citation type="journal article" date="2008" name="BMC Evol. Biol.">
        <title>Gene conversion and purifying selection of a placenta-specific ERV-V envelope gene during simian evolution.</title>
        <authorList>
            <person name="Kjeldbjerg A.L."/>
            <person name="Villesen P."/>
            <person name="Aagaard L."/>
            <person name="Pedersen F.S."/>
        </authorList>
    </citation>
    <scope>NUCLEOTIDE SEQUENCE [GENOMIC DNA]</scope>
    <scope>TISSUE SPECIFICITY</scope>
</reference>
<reference key="2">
    <citation type="journal article" date="2004" name="Nature">
        <title>The DNA sequence and biology of human chromosome 19.</title>
        <authorList>
            <person name="Grimwood J."/>
            <person name="Gordon L.A."/>
            <person name="Olsen A.S."/>
            <person name="Terry A."/>
            <person name="Schmutz J."/>
            <person name="Lamerdin J.E."/>
            <person name="Hellsten U."/>
            <person name="Goodstein D."/>
            <person name="Couronne O."/>
            <person name="Tran-Gyamfi M."/>
            <person name="Aerts A."/>
            <person name="Altherr M."/>
            <person name="Ashworth L."/>
            <person name="Bajorek E."/>
            <person name="Black S."/>
            <person name="Branscomb E."/>
            <person name="Caenepeel S."/>
            <person name="Carrano A.V."/>
            <person name="Caoile C."/>
            <person name="Chan Y.M."/>
            <person name="Christensen M."/>
            <person name="Cleland C.A."/>
            <person name="Copeland A."/>
            <person name="Dalin E."/>
            <person name="Dehal P."/>
            <person name="Denys M."/>
            <person name="Detter J.C."/>
            <person name="Escobar J."/>
            <person name="Flowers D."/>
            <person name="Fotopulos D."/>
            <person name="Garcia C."/>
            <person name="Georgescu A.M."/>
            <person name="Glavina T."/>
            <person name="Gomez M."/>
            <person name="Gonzales E."/>
            <person name="Groza M."/>
            <person name="Hammon N."/>
            <person name="Hawkins T."/>
            <person name="Haydu L."/>
            <person name="Ho I."/>
            <person name="Huang W."/>
            <person name="Israni S."/>
            <person name="Jett J."/>
            <person name="Kadner K."/>
            <person name="Kimball H."/>
            <person name="Kobayashi A."/>
            <person name="Larionov V."/>
            <person name="Leem S.-H."/>
            <person name="Lopez F."/>
            <person name="Lou Y."/>
            <person name="Lowry S."/>
            <person name="Malfatti S."/>
            <person name="Martinez D."/>
            <person name="McCready P.M."/>
            <person name="Medina C."/>
            <person name="Morgan J."/>
            <person name="Nelson K."/>
            <person name="Nolan M."/>
            <person name="Ovcharenko I."/>
            <person name="Pitluck S."/>
            <person name="Pollard M."/>
            <person name="Popkie A.P."/>
            <person name="Predki P."/>
            <person name="Quan G."/>
            <person name="Ramirez L."/>
            <person name="Rash S."/>
            <person name="Retterer J."/>
            <person name="Rodriguez A."/>
            <person name="Rogers S."/>
            <person name="Salamov A."/>
            <person name="Salazar A."/>
            <person name="She X."/>
            <person name="Smith D."/>
            <person name="Slezak T."/>
            <person name="Solovyev V."/>
            <person name="Thayer N."/>
            <person name="Tice H."/>
            <person name="Tsai M."/>
            <person name="Ustaszewska A."/>
            <person name="Vo N."/>
            <person name="Wagner M."/>
            <person name="Wheeler J."/>
            <person name="Wu K."/>
            <person name="Xie G."/>
            <person name="Yang J."/>
            <person name="Dubchak I."/>
            <person name="Furey T.S."/>
            <person name="DeJong P."/>
            <person name="Dickson M."/>
            <person name="Gordon D."/>
            <person name="Eichler E.E."/>
            <person name="Pennacchio L.A."/>
            <person name="Richardson P."/>
            <person name="Stubbs L."/>
            <person name="Rokhsar D.S."/>
            <person name="Myers R.M."/>
            <person name="Rubin E.M."/>
            <person name="Lucas S.M."/>
        </authorList>
    </citation>
    <scope>NUCLEOTIDE SEQUENCE [LARGE SCALE GENOMIC DNA]</scope>
</reference>
<gene>
    <name type="primary">ERVV-2</name>
    <name type="synonym">ENVV2</name>
</gene>
<comment type="subcellular location">
    <subcellularLocation>
        <location evidence="3">Membrane</location>
        <topology evidence="3">Multi-pass membrane protein</topology>
    </subcellularLocation>
</comment>
<comment type="tissue specificity">
    <text evidence="2">Expressed in placenta.</text>
</comment>
<comment type="similarity">
    <text evidence="3">Belongs to the gamma type-C retroviral envelope protein family.</text>
</comment>
<protein>
    <recommendedName>
        <fullName>Endogenous retrovirus group V member 2 Env polyprotein</fullName>
    </recommendedName>
    <alternativeName>
        <fullName>HERV-V_19q13.41 provirus ancestral Env polyprotein 2</fullName>
    </alternativeName>
</protein>
<accession>B6SEH9</accession>
<dbReference type="EMBL" id="EU853143">
    <property type="protein sequence ID" value="ACI62854.1"/>
    <property type="molecule type" value="Genomic_DNA"/>
</dbReference>
<dbReference type="EMBL" id="AC010328">
    <property type="status" value="NOT_ANNOTATED_CDS"/>
    <property type="molecule type" value="Genomic_DNA"/>
</dbReference>
<dbReference type="CCDS" id="CCDS59420.1"/>
<dbReference type="RefSeq" id="NP_001177984.1">
    <property type="nucleotide sequence ID" value="NM_001191055.2"/>
</dbReference>
<dbReference type="SMR" id="B6SEH9"/>
<dbReference type="STRING" id="9606.ENSP00000472919"/>
<dbReference type="GlyCosmos" id="B6SEH9">
    <property type="glycosylation" value="1 site, No reported glycans"/>
</dbReference>
<dbReference type="GlyGen" id="B6SEH9">
    <property type="glycosylation" value="1 site"/>
</dbReference>
<dbReference type="iPTMnet" id="B6SEH9"/>
<dbReference type="PhosphoSitePlus" id="B6SEH9"/>
<dbReference type="BioMuta" id="ERVV-2"/>
<dbReference type="MassIVE" id="B6SEH9"/>
<dbReference type="PaxDb" id="9606-ENSP00000472919"/>
<dbReference type="PeptideAtlas" id="B6SEH9"/>
<dbReference type="ProteomicsDB" id="6249"/>
<dbReference type="DNASU" id="100271846"/>
<dbReference type="Ensembl" id="ENST00000601417.3">
    <property type="protein sequence ID" value="ENSP00000472919.1"/>
    <property type="gene ID" value="ENSG00000268964.3"/>
</dbReference>
<dbReference type="GeneID" id="100271846"/>
<dbReference type="KEGG" id="hsa:100271846"/>
<dbReference type="MANE-Select" id="ENST00000601417.3">
    <property type="protein sequence ID" value="ENSP00000472919.1"/>
    <property type="RefSeq nucleotide sequence ID" value="NM_001191055.2"/>
    <property type="RefSeq protein sequence ID" value="NP_001177984.1"/>
</dbReference>
<dbReference type="AGR" id="HGNC:39051"/>
<dbReference type="CTD" id="100271846"/>
<dbReference type="DisGeNET" id="100271846"/>
<dbReference type="GeneCards" id="ERVV-2"/>
<dbReference type="HGNC" id="HGNC:39051">
    <property type="gene designation" value="ERVV-2"/>
</dbReference>
<dbReference type="HPA" id="ENSG00000268964">
    <property type="expression patterns" value="Tissue enriched (placenta)"/>
</dbReference>
<dbReference type="neXtProt" id="NX_B6SEH9"/>
<dbReference type="VEuPathDB" id="HostDB:ENSG00000268964"/>
<dbReference type="eggNOG" id="ENOG502SD08">
    <property type="taxonomic scope" value="Eukaryota"/>
</dbReference>
<dbReference type="GeneTree" id="ENSGT00940000164101"/>
<dbReference type="HOGENOM" id="CLU_045261_0_0_1"/>
<dbReference type="InParanoid" id="B6SEH9"/>
<dbReference type="OMA" id="QFHMESP"/>
<dbReference type="OrthoDB" id="9558098at2759"/>
<dbReference type="PAN-GO" id="B6SEH9">
    <property type="GO annotations" value="0 GO annotations based on evolutionary models"/>
</dbReference>
<dbReference type="PhylomeDB" id="B6SEH9"/>
<dbReference type="PathwayCommons" id="B6SEH9"/>
<dbReference type="BioGRID-ORCS" id="100271846">
    <property type="hits" value="18 hits in 1056 CRISPR screens"/>
</dbReference>
<dbReference type="GenomeRNAi" id="100271846"/>
<dbReference type="Pharos" id="B6SEH9">
    <property type="development level" value="Tdark"/>
</dbReference>
<dbReference type="PRO" id="PR:B6SEH9"/>
<dbReference type="Proteomes" id="UP000005640">
    <property type="component" value="Chromosome 19"/>
</dbReference>
<dbReference type="RNAct" id="B6SEH9">
    <property type="molecule type" value="protein"/>
</dbReference>
<dbReference type="Bgee" id="ENSG00000268964">
    <property type="expression patterns" value="Expressed in placenta and 4 other cell types or tissues"/>
</dbReference>
<dbReference type="ExpressionAtlas" id="B6SEH9">
    <property type="expression patterns" value="baseline and differential"/>
</dbReference>
<dbReference type="GO" id="GO:0016020">
    <property type="term" value="C:membrane"/>
    <property type="evidence" value="ECO:0007669"/>
    <property type="project" value="UniProtKB-SubCell"/>
</dbReference>
<dbReference type="CDD" id="cd09950">
    <property type="entry name" value="ENVV1-like_HR1-HR2"/>
    <property type="match status" value="1"/>
</dbReference>
<dbReference type="Gene3D" id="1.10.287.210">
    <property type="match status" value="1"/>
</dbReference>
<dbReference type="InterPro" id="IPR018154">
    <property type="entry name" value="TLV/ENV_coat_polyprotein"/>
</dbReference>
<dbReference type="PANTHER" id="PTHR10424:SF74">
    <property type="entry name" value="ENDOGENOUS RETROVIRUS GROUP V MEMBER 2 ENV POLYPROTEIN"/>
    <property type="match status" value="1"/>
</dbReference>
<dbReference type="PANTHER" id="PTHR10424">
    <property type="entry name" value="VIRAL ENVELOPE PROTEIN"/>
    <property type="match status" value="1"/>
</dbReference>
<dbReference type="Pfam" id="PF00429">
    <property type="entry name" value="TLV_coat"/>
    <property type="match status" value="1"/>
</dbReference>
<dbReference type="SUPFAM" id="SSF58069">
    <property type="entry name" value="Virus ectodomain"/>
    <property type="match status" value="1"/>
</dbReference>
<evidence type="ECO:0000255" key="1"/>
<evidence type="ECO:0000269" key="2">
    <source>
    </source>
</evidence>
<evidence type="ECO:0000305" key="3"/>
<proteinExistence type="evidence at protein level"/>
<feature type="signal peptide" evidence="1">
    <location>
        <begin position="1"/>
        <end position="21"/>
    </location>
</feature>
<feature type="chain" id="PRO_0000411001" description="Endogenous retrovirus group V member 2 Env polyprotein">
    <location>
        <begin position="22"/>
        <end position="535"/>
    </location>
</feature>
<feature type="topological domain" description="Extracellular" evidence="1">
    <location>
        <begin position="22"/>
        <end position="321"/>
    </location>
</feature>
<feature type="transmembrane region" description="Helical" evidence="1">
    <location>
        <begin position="322"/>
        <end position="342"/>
    </location>
</feature>
<feature type="topological domain" description="Cytoplasmic" evidence="1">
    <location>
        <begin position="343"/>
        <end position="456"/>
    </location>
</feature>
<feature type="transmembrane region" description="Helical" evidence="1">
    <location>
        <begin position="457"/>
        <end position="477"/>
    </location>
</feature>
<feature type="topological domain" description="Extracellular" evidence="1">
    <location>
        <begin position="478"/>
        <end position="535"/>
    </location>
</feature>
<feature type="glycosylation site" description="N-linked (GlcNAc...) asparagine" evidence="1">
    <location>
        <position position="68"/>
    </location>
</feature>
<organism>
    <name type="scientific">Homo sapiens</name>
    <name type="common">Human</name>
    <dbReference type="NCBI Taxonomy" id="9606"/>
    <lineage>
        <taxon>Eukaryota</taxon>
        <taxon>Metazoa</taxon>
        <taxon>Chordata</taxon>
        <taxon>Craniata</taxon>
        <taxon>Vertebrata</taxon>
        <taxon>Euteleostomi</taxon>
        <taxon>Mammalia</taxon>
        <taxon>Eutheria</taxon>
        <taxon>Euarchontoglires</taxon>
        <taxon>Primates</taxon>
        <taxon>Haplorrhini</taxon>
        <taxon>Catarrhini</taxon>
        <taxon>Hominidae</taxon>
        <taxon>Homo</taxon>
    </lineage>
</organism>
<sequence>MTEKFLFLYLSLLPMPLLSQAQWNENSLVSFSKIIASGNHLSNCWICHNFITRSSSYQYILVRNFSLNLTFGSGIPEGQHKSVPLQVSLANSAHQVPCLDLTPPFNQSSKTSFYFYNCSSLNQTCCPCPEGHCDRKNTSEEGFPSPTIHPMSFSPAGCHPNLTHWCPAKQMNDYRDKSPQNRCAAWEGKELITWRVLYSLPKAHTVPTWPKSTVPLGGPLSPACNQTIPAGWKSQLHKWFDSHIPRWACTPPGYVFLCGPQKNKLPFDGSPKITYSTPPVANLYTCINNIQHTGECAVGLLGPRGIGVTIYNTTQPRQKRALGLILAGMGAAIGMIAPWGGFTYHDVTLRNLSRQIDNIAKSTRDSISKLKASIDSLANVVMDNRLALDYLLAEQGGVCAVINKSCCVYVNNSGAIEEDIKKIYDEATWLHDFGKGGASARAIWEAVKSALPSLNWFVPLLGPATVILLLFLFGPCFFNLLIKCVSSRIKQFHMKSPQMERYQLSVIGGPSTYKHISPLDASGQRFRETMEEFSL</sequence>